<reference key="1">
    <citation type="journal article" date="2001" name="Plant Physiol.">
        <title>Diversity of Arabidopsis genes encoding precursors for phytosulfokine, a peptide growth factor.</title>
        <authorList>
            <person name="Yang H."/>
            <person name="Matsubayashi Y."/>
            <person name="Nakamura K."/>
            <person name="Sakagami Y."/>
        </authorList>
    </citation>
    <scope>NUCLEOTIDE SEQUENCE [GENOMIC DNA / MRNA]</scope>
    <source>
        <strain>cv. Columbia</strain>
    </source>
</reference>
<reference key="2">
    <citation type="journal article" date="1999" name="Nature">
        <title>Sequence and analysis of chromosome 2 of the plant Arabidopsis thaliana.</title>
        <authorList>
            <person name="Lin X."/>
            <person name="Kaul S."/>
            <person name="Rounsley S.D."/>
            <person name="Shea T.P."/>
            <person name="Benito M.-I."/>
            <person name="Town C.D."/>
            <person name="Fujii C.Y."/>
            <person name="Mason T.M."/>
            <person name="Bowman C.L."/>
            <person name="Barnstead M.E."/>
            <person name="Feldblyum T.V."/>
            <person name="Buell C.R."/>
            <person name="Ketchum K.A."/>
            <person name="Lee J.J."/>
            <person name="Ronning C.M."/>
            <person name="Koo H.L."/>
            <person name="Moffat K.S."/>
            <person name="Cronin L.A."/>
            <person name="Shen M."/>
            <person name="Pai G."/>
            <person name="Van Aken S."/>
            <person name="Umayam L."/>
            <person name="Tallon L.J."/>
            <person name="Gill J.E."/>
            <person name="Adams M.D."/>
            <person name="Carrera A.J."/>
            <person name="Creasy T.H."/>
            <person name="Goodman H.M."/>
            <person name="Somerville C.R."/>
            <person name="Copenhaver G.P."/>
            <person name="Preuss D."/>
            <person name="Nierman W.C."/>
            <person name="White O."/>
            <person name="Eisen J.A."/>
            <person name="Salzberg S.L."/>
            <person name="Fraser C.M."/>
            <person name="Venter J.C."/>
        </authorList>
    </citation>
    <scope>NUCLEOTIDE SEQUENCE [LARGE SCALE GENOMIC DNA]</scope>
    <source>
        <strain>cv. Columbia</strain>
    </source>
</reference>
<reference key="3">
    <citation type="journal article" date="2017" name="Plant J.">
        <title>Araport11: a complete reannotation of the Arabidopsis thaliana reference genome.</title>
        <authorList>
            <person name="Cheng C.Y."/>
            <person name="Krishnakumar V."/>
            <person name="Chan A.P."/>
            <person name="Thibaud-Nissen F."/>
            <person name="Schobel S."/>
            <person name="Town C.D."/>
        </authorList>
    </citation>
    <scope>GENOME REANNOTATION</scope>
    <source>
        <strain>cv. Columbia</strain>
    </source>
</reference>
<reference key="4">
    <citation type="journal article" date="2002" name="Science">
        <title>Functional annotation of a full-length Arabidopsis cDNA collection.</title>
        <authorList>
            <person name="Seki M."/>
            <person name="Narusaka M."/>
            <person name="Kamiya A."/>
            <person name="Ishida J."/>
            <person name="Satou M."/>
            <person name="Sakurai T."/>
            <person name="Nakajima M."/>
            <person name="Enju A."/>
            <person name="Akiyama K."/>
            <person name="Oono Y."/>
            <person name="Muramatsu M."/>
            <person name="Hayashizaki Y."/>
            <person name="Kawai J."/>
            <person name="Carninci P."/>
            <person name="Itoh M."/>
            <person name="Ishii Y."/>
            <person name="Arakawa T."/>
            <person name="Shibata K."/>
            <person name="Shinagawa A."/>
            <person name="Shinozaki K."/>
        </authorList>
    </citation>
    <scope>NUCLEOTIDE SEQUENCE [LARGE SCALE MRNA]</scope>
    <source>
        <strain>cv. Columbia</strain>
    </source>
</reference>
<reference key="5">
    <citation type="journal article" date="2003" name="Science">
        <title>Empirical analysis of transcriptional activity in the Arabidopsis genome.</title>
        <authorList>
            <person name="Yamada K."/>
            <person name="Lim J."/>
            <person name="Dale J.M."/>
            <person name="Chen H."/>
            <person name="Shinn P."/>
            <person name="Palm C.J."/>
            <person name="Southwick A.M."/>
            <person name="Wu H.C."/>
            <person name="Kim C.J."/>
            <person name="Nguyen M."/>
            <person name="Pham P.K."/>
            <person name="Cheuk R.F."/>
            <person name="Karlin-Newmann G."/>
            <person name="Liu S.X."/>
            <person name="Lam B."/>
            <person name="Sakano H."/>
            <person name="Wu T."/>
            <person name="Yu G."/>
            <person name="Miranda M."/>
            <person name="Quach H.L."/>
            <person name="Tripp M."/>
            <person name="Chang C.H."/>
            <person name="Lee J.M."/>
            <person name="Toriumi M.J."/>
            <person name="Chan M.M."/>
            <person name="Tang C.C."/>
            <person name="Onodera C.S."/>
            <person name="Deng J.M."/>
            <person name="Akiyama K."/>
            <person name="Ansari Y."/>
            <person name="Arakawa T."/>
            <person name="Banh J."/>
            <person name="Banno F."/>
            <person name="Bowser L."/>
            <person name="Brooks S.Y."/>
            <person name="Carninci P."/>
            <person name="Chao Q."/>
            <person name="Choy N."/>
            <person name="Enju A."/>
            <person name="Goldsmith A.D."/>
            <person name="Gurjal M."/>
            <person name="Hansen N.F."/>
            <person name="Hayashizaki Y."/>
            <person name="Johnson-Hopson C."/>
            <person name="Hsuan V.W."/>
            <person name="Iida K."/>
            <person name="Karnes M."/>
            <person name="Khan S."/>
            <person name="Koesema E."/>
            <person name="Ishida J."/>
            <person name="Jiang P.X."/>
            <person name="Jones T."/>
            <person name="Kawai J."/>
            <person name="Kamiya A."/>
            <person name="Meyers C."/>
            <person name="Nakajima M."/>
            <person name="Narusaka M."/>
            <person name="Seki M."/>
            <person name="Sakurai T."/>
            <person name="Satou M."/>
            <person name="Tamse R."/>
            <person name="Vaysberg M."/>
            <person name="Wallender E.K."/>
            <person name="Wong C."/>
            <person name="Yamamura Y."/>
            <person name="Yuan S."/>
            <person name="Shinozaki K."/>
            <person name="Davis R.W."/>
            <person name="Theologis A."/>
            <person name="Ecker J.R."/>
        </authorList>
    </citation>
    <scope>NUCLEOTIDE SEQUENCE [LARGE SCALE MRNA]</scope>
    <source>
        <strain>cv. Columbia</strain>
    </source>
</reference>
<reference key="6">
    <citation type="journal article" date="2002" name="Plant Sci.">
        <title>Comparative analysis of PSK peptide growth factor precursor homologs.</title>
        <authorList>
            <person name="Lorbiecke R."/>
            <person name="Sauter M.M."/>
        </authorList>
    </citation>
    <scope>IDENTIFICATION</scope>
</reference>
<reference key="7">
    <citation type="journal article" date="2006" name="Plant Physiol.">
        <title>Disruption and overexpression of Arabidopsis phytosulfokine receptor gene affects cellular longevity and potential for growth.</title>
        <authorList>
            <person name="Matsubayashi Y."/>
            <person name="Ogawa M."/>
            <person name="Kihara H."/>
            <person name="Niwa M."/>
            <person name="Sakagami Y."/>
        </authorList>
    </citation>
    <scope>TISSUE SPECIFICITY</scope>
</reference>
<reference key="8">
    <citation type="journal article" date="2010" name="Physiol. Plantarum">
        <title>A role for PSK signaling in wounding and microbial interactions in Arabidopsis.</title>
        <authorList>
            <person name="Loivamaki M."/>
            <person name="Stuhrwohldt N."/>
            <person name="Deeken R."/>
            <person name="Steffens B."/>
            <person name="Roitsch T."/>
            <person name="Hedrich R."/>
            <person name="Sauter M."/>
        </authorList>
    </citation>
    <scope>INDUCTION BY FUNGAL INFECTION</scope>
</reference>
<sequence length="87" mass="9627">MANVSALLTIALLLCSTLMCTARPEPAISISITTAADPCNMEKKIEGKLDDMHMVDENCGADDEDCLMRRTLVAHTDYIYTQKKKHP</sequence>
<protein>
    <recommendedName>
        <fullName>Phytosulfokines 2</fullName>
        <shortName>AtPSK2</shortName>
    </recommendedName>
    <component>
        <recommendedName>
            <fullName>Phytosulfokine-alpha</fullName>
            <shortName>PSK-alpha</shortName>
            <shortName>Phytosulfokine-a</shortName>
        </recommendedName>
    </component>
    <component>
        <recommendedName>
            <fullName>Phytosulfokine-beta</fullName>
            <shortName>PSK-beta</shortName>
            <shortName>Phytosulfokine-b</shortName>
        </recommendedName>
    </component>
</protein>
<comment type="function">
    <text>Promotes plant cell differentiation, organogenesis and somatic embryogenesis as well as cell proliferation.</text>
</comment>
<comment type="subcellular location">
    <subcellularLocation>
        <location>Secreted</location>
    </subcellularLocation>
</comment>
<comment type="tissue specificity">
    <text evidence="3">Expressed in stems, roots and leaves.</text>
</comment>
<comment type="induction">
    <text evidence="4">Up-regulated by fungal infection.</text>
</comment>
<comment type="PTM">
    <text evidence="1">Sulfation is important for activity and for the binding to a putative membrane receptor.</text>
</comment>
<comment type="PTM">
    <text>PSK-beta is an enzymatic derivative of PSK-alpha.</text>
</comment>
<comment type="similarity">
    <text evidence="5">Belongs to the phytosulfokine family.</text>
</comment>
<feature type="signal peptide" evidence="2">
    <location>
        <begin position="1"/>
        <end position="22"/>
    </location>
</feature>
<feature type="propeptide" id="PRO_0000024085">
    <location>
        <begin position="23"/>
        <end position="77"/>
    </location>
</feature>
<feature type="peptide" id="PRO_0000024086" description="Phytosulfokine-alpha">
    <location>
        <begin position="78"/>
        <end position="82"/>
    </location>
</feature>
<feature type="peptide" id="PRO_0000024087" description="Phytosulfokine-beta">
    <location>
        <begin position="78"/>
        <end position="81"/>
    </location>
</feature>
<feature type="propeptide" id="PRO_0000024088">
    <location>
        <begin position="83"/>
        <end position="87"/>
    </location>
</feature>
<feature type="modified residue" description="Sulfotyrosine" evidence="1">
    <location>
        <position position="78"/>
    </location>
</feature>
<feature type="modified residue" description="Sulfotyrosine" evidence="1">
    <location>
        <position position="80"/>
    </location>
</feature>
<name>PSK2_ARATH</name>
<accession>O81003</accession>
<accession>Q7PCC1</accession>
<organism>
    <name type="scientific">Arabidopsis thaliana</name>
    <name type="common">Mouse-ear cress</name>
    <dbReference type="NCBI Taxonomy" id="3702"/>
    <lineage>
        <taxon>Eukaryota</taxon>
        <taxon>Viridiplantae</taxon>
        <taxon>Streptophyta</taxon>
        <taxon>Embryophyta</taxon>
        <taxon>Tracheophyta</taxon>
        <taxon>Spermatophyta</taxon>
        <taxon>Magnoliopsida</taxon>
        <taxon>eudicotyledons</taxon>
        <taxon>Gunneridae</taxon>
        <taxon>Pentapetalae</taxon>
        <taxon>rosids</taxon>
        <taxon>malvids</taxon>
        <taxon>Brassicales</taxon>
        <taxon>Brassicaceae</taxon>
        <taxon>Camelineae</taxon>
        <taxon>Arabidopsis</taxon>
    </lineage>
</organism>
<gene>
    <name type="primary">PSK2</name>
    <name type="ordered locus">At2g22860</name>
    <name type="ORF">T20K9.7</name>
</gene>
<proteinExistence type="evidence at transcript level"/>
<keyword id="KW-0217">Developmental protein</keyword>
<keyword id="KW-0221">Differentiation</keyword>
<keyword id="KW-0339">Growth factor</keyword>
<keyword id="KW-1185">Reference proteome</keyword>
<keyword id="KW-0964">Secreted</keyword>
<keyword id="KW-0732">Signal</keyword>
<keyword id="KW-0765">Sulfation</keyword>
<evidence type="ECO:0000250" key="1"/>
<evidence type="ECO:0000255" key="2"/>
<evidence type="ECO:0000269" key="3">
    <source>
    </source>
</evidence>
<evidence type="ECO:0000269" key="4">
    <source>
    </source>
</evidence>
<evidence type="ECO:0000305" key="5"/>
<dbReference type="EMBL" id="AB029344">
    <property type="protein sequence ID" value="BAB72148.1"/>
    <property type="molecule type" value="mRNA"/>
</dbReference>
<dbReference type="EMBL" id="AB052752">
    <property type="protein sequence ID" value="BAB72151.1"/>
    <property type="molecule type" value="Genomic_DNA"/>
</dbReference>
<dbReference type="EMBL" id="AC004786">
    <property type="protein sequence ID" value="AAC32433.1"/>
    <property type="molecule type" value="Genomic_DNA"/>
</dbReference>
<dbReference type="EMBL" id="CP002685">
    <property type="protein sequence ID" value="AEC07366.1"/>
    <property type="molecule type" value="Genomic_DNA"/>
</dbReference>
<dbReference type="EMBL" id="AK118870">
    <property type="protein sequence ID" value="BAC43456.1"/>
    <property type="molecule type" value="mRNA"/>
</dbReference>
<dbReference type="EMBL" id="BT004954">
    <property type="protein sequence ID" value="AAO50487.1"/>
    <property type="molecule type" value="mRNA"/>
</dbReference>
<dbReference type="EMBL" id="BK000108">
    <property type="protein sequence ID" value="DAA00272.1"/>
    <property type="molecule type" value="mRNA"/>
</dbReference>
<dbReference type="PIR" id="G84617">
    <property type="entry name" value="G84617"/>
</dbReference>
<dbReference type="RefSeq" id="NP_179871.1">
    <property type="nucleotide sequence ID" value="NM_127851.5"/>
</dbReference>
<dbReference type="STRING" id="3702.O81003"/>
<dbReference type="PaxDb" id="3702-AT2G22860.1"/>
<dbReference type="EnsemblPlants" id="AT2G22860.1">
    <property type="protein sequence ID" value="AT2G22860.1"/>
    <property type="gene ID" value="AT2G22860"/>
</dbReference>
<dbReference type="GeneID" id="816817"/>
<dbReference type="Gramene" id="AT2G22860.1">
    <property type="protein sequence ID" value="AT2G22860.1"/>
    <property type="gene ID" value="AT2G22860"/>
</dbReference>
<dbReference type="KEGG" id="ath:AT2G22860"/>
<dbReference type="Araport" id="AT2G22860"/>
<dbReference type="TAIR" id="AT2G22860">
    <property type="gene designation" value="PSK2"/>
</dbReference>
<dbReference type="eggNOG" id="ENOG502S6XU">
    <property type="taxonomic scope" value="Eukaryota"/>
</dbReference>
<dbReference type="HOGENOM" id="CLU_165727_0_1_1"/>
<dbReference type="InParanoid" id="O81003"/>
<dbReference type="OMA" id="AADPCNM"/>
<dbReference type="PhylomeDB" id="O81003"/>
<dbReference type="PRO" id="PR:O81003"/>
<dbReference type="Proteomes" id="UP000006548">
    <property type="component" value="Chromosome 2"/>
</dbReference>
<dbReference type="ExpressionAtlas" id="O81003">
    <property type="expression patterns" value="baseline and differential"/>
</dbReference>
<dbReference type="GO" id="GO:0031012">
    <property type="term" value="C:extracellular matrix"/>
    <property type="evidence" value="ECO:0000250"/>
    <property type="project" value="TAIR"/>
</dbReference>
<dbReference type="GO" id="GO:0005576">
    <property type="term" value="C:extracellular region"/>
    <property type="evidence" value="ECO:0007669"/>
    <property type="project" value="UniProtKB-SubCell"/>
</dbReference>
<dbReference type="GO" id="GO:0008083">
    <property type="term" value="F:growth factor activity"/>
    <property type="evidence" value="ECO:0007669"/>
    <property type="project" value="UniProtKB-KW"/>
</dbReference>
<dbReference type="GO" id="GO:0030154">
    <property type="term" value="P:cell differentiation"/>
    <property type="evidence" value="ECO:0000250"/>
    <property type="project" value="TAIR"/>
</dbReference>
<dbReference type="GO" id="GO:0008283">
    <property type="term" value="P:cell population proliferation"/>
    <property type="evidence" value="ECO:0007669"/>
    <property type="project" value="InterPro"/>
</dbReference>
<dbReference type="InterPro" id="IPR009438">
    <property type="entry name" value="Phytosulfokine"/>
</dbReference>
<dbReference type="PANTHER" id="PTHR33285:SF23">
    <property type="entry name" value="PHYTOSULFOKINES 2"/>
    <property type="match status" value="1"/>
</dbReference>
<dbReference type="PANTHER" id="PTHR33285">
    <property type="entry name" value="PHYTOSULFOKINES 3"/>
    <property type="match status" value="1"/>
</dbReference>
<dbReference type="Pfam" id="PF06404">
    <property type="entry name" value="PSK"/>
    <property type="match status" value="1"/>
</dbReference>